<protein>
    <recommendedName>
        <fullName evidence="1">UPF0434 protein PFLU_3771</fullName>
    </recommendedName>
</protein>
<organism>
    <name type="scientific">Pseudomonas fluorescens (strain SBW25)</name>
    <dbReference type="NCBI Taxonomy" id="216595"/>
    <lineage>
        <taxon>Bacteria</taxon>
        <taxon>Pseudomonadati</taxon>
        <taxon>Pseudomonadota</taxon>
        <taxon>Gammaproteobacteria</taxon>
        <taxon>Pseudomonadales</taxon>
        <taxon>Pseudomonadaceae</taxon>
        <taxon>Pseudomonas</taxon>
    </lineage>
</organism>
<name>Y3771_PSEFS</name>
<evidence type="ECO:0000255" key="1">
    <source>
        <dbReference type="HAMAP-Rule" id="MF_01187"/>
    </source>
</evidence>
<feature type="chain" id="PRO_1000213785" description="UPF0434 protein PFLU_3771">
    <location>
        <begin position="1"/>
        <end position="61"/>
    </location>
</feature>
<proteinExistence type="inferred from homology"/>
<dbReference type="EMBL" id="AM181176">
    <property type="protein sequence ID" value="CAY50057.1"/>
    <property type="molecule type" value="Genomic_DNA"/>
</dbReference>
<dbReference type="RefSeq" id="WP_003174668.1">
    <property type="nucleotide sequence ID" value="NC_012660.1"/>
</dbReference>
<dbReference type="SMR" id="C3JY28"/>
<dbReference type="STRING" id="294.SRM1_04122"/>
<dbReference type="eggNOG" id="COG2835">
    <property type="taxonomic scope" value="Bacteria"/>
</dbReference>
<dbReference type="HOGENOM" id="CLU_155659_3_1_6"/>
<dbReference type="OrthoDB" id="9812205at2"/>
<dbReference type="GO" id="GO:0005829">
    <property type="term" value="C:cytosol"/>
    <property type="evidence" value="ECO:0007669"/>
    <property type="project" value="TreeGrafter"/>
</dbReference>
<dbReference type="FunFam" id="2.20.25.10:FF:000002">
    <property type="entry name" value="UPF0434 protein YcaR"/>
    <property type="match status" value="1"/>
</dbReference>
<dbReference type="Gene3D" id="2.20.25.10">
    <property type="match status" value="1"/>
</dbReference>
<dbReference type="HAMAP" id="MF_01187">
    <property type="entry name" value="UPF0434"/>
    <property type="match status" value="1"/>
</dbReference>
<dbReference type="InterPro" id="IPR005651">
    <property type="entry name" value="Trm112-like"/>
</dbReference>
<dbReference type="PANTHER" id="PTHR33505:SF4">
    <property type="entry name" value="PROTEIN PREY, MITOCHONDRIAL"/>
    <property type="match status" value="1"/>
</dbReference>
<dbReference type="PANTHER" id="PTHR33505">
    <property type="entry name" value="ZGC:162634"/>
    <property type="match status" value="1"/>
</dbReference>
<dbReference type="Pfam" id="PF03966">
    <property type="entry name" value="Trm112p"/>
    <property type="match status" value="1"/>
</dbReference>
<dbReference type="SUPFAM" id="SSF158997">
    <property type="entry name" value="Trm112p-like"/>
    <property type="match status" value="1"/>
</dbReference>
<accession>C3JY28</accession>
<reference key="1">
    <citation type="journal article" date="2009" name="Genome Biol.">
        <title>Genomic and genetic analyses of diversity and plant interactions of Pseudomonas fluorescens.</title>
        <authorList>
            <person name="Silby M.W."/>
            <person name="Cerdeno-Tarraga A.M."/>
            <person name="Vernikos G.S."/>
            <person name="Giddens S.R."/>
            <person name="Jackson R.W."/>
            <person name="Preston G.M."/>
            <person name="Zhang X.-X."/>
            <person name="Moon C.D."/>
            <person name="Gehrig S.M."/>
            <person name="Godfrey S.A.C."/>
            <person name="Knight C.G."/>
            <person name="Malone J.G."/>
            <person name="Robinson Z."/>
            <person name="Spiers A.J."/>
            <person name="Harris S."/>
            <person name="Challis G.L."/>
            <person name="Yaxley A.M."/>
            <person name="Harris D."/>
            <person name="Seeger K."/>
            <person name="Murphy L."/>
            <person name="Rutter S."/>
            <person name="Squares R."/>
            <person name="Quail M.A."/>
            <person name="Saunders E."/>
            <person name="Mavromatis K."/>
            <person name="Brettin T.S."/>
            <person name="Bentley S.D."/>
            <person name="Hothersall J."/>
            <person name="Stephens E."/>
            <person name="Thomas C.M."/>
            <person name="Parkhill J."/>
            <person name="Levy S.B."/>
            <person name="Rainey P.B."/>
            <person name="Thomson N.R."/>
        </authorList>
    </citation>
    <scope>NUCLEOTIDE SEQUENCE [LARGE SCALE GENOMIC DNA]</scope>
    <source>
        <strain>SBW25</strain>
    </source>
</reference>
<comment type="similarity">
    <text evidence="1">Belongs to the UPF0434 family.</text>
</comment>
<sequence length="61" mass="6630">MDTKLLDILACPICKGPLKLSADKTELISKGAGLAYPIRDGIPVMLESEARTLTTDERLDK</sequence>
<gene>
    <name type="ordered locus">PFLU_3771</name>
</gene>